<keyword id="KW-0067">ATP-binding</keyword>
<keyword id="KW-0436">Ligase</keyword>
<keyword id="KW-0460">Magnesium</keyword>
<keyword id="KW-0479">Metal-binding</keyword>
<keyword id="KW-0547">Nucleotide-binding</keyword>
<keyword id="KW-0816">Tricarboxylic acid cycle</keyword>
<evidence type="ECO:0000255" key="1">
    <source>
        <dbReference type="HAMAP-Rule" id="MF_00558"/>
    </source>
</evidence>
<sequence length="398" mass="42745">MNIHEYQAKRLLHEYGAPVANGVAVYSVEQAEKWAKKLPGPLYVVKSQIHAGGRGKGNFKELDSDAKGGVRLAKSVEEVVANVKEMLGKTLVTKQTGPEGKQVNRLYIEDGANIERELYLSLLIDRTTGRVAFVVSTEGGMDIETVAAETPEKICTLSIDPAEGVTDADCVKLCDELNLSGNAREDGEKLFPILYKAFCEKDMSLLEINPLIVMDDGRLRVLDAKVSFDNNALFRHPDILGLRDISEEDPKEIEASKHDLAYIALDGMIGCMVNGAGLAMATMDIIKLYGAEPANFLDVGGGASKEKVTHAFKIITADPNVKGILVNIFGGIMRCDVIAEGVIAAVKEVGLKVPLVVRLEGTNVEQGKAIINDSGLNVISANDLDDAAQKIVAAVKGA</sequence>
<gene>
    <name evidence="1" type="primary">sucC</name>
    <name type="ordered locus">BARBAKC583_0023</name>
</gene>
<dbReference type="EC" id="6.2.1.5" evidence="1"/>
<dbReference type="EMBL" id="CP000524">
    <property type="protein sequence ID" value="ABM45552.1"/>
    <property type="molecule type" value="Genomic_DNA"/>
</dbReference>
<dbReference type="RefSeq" id="WP_005765712.1">
    <property type="nucleotide sequence ID" value="NC_008783.1"/>
</dbReference>
<dbReference type="SMR" id="A1UQV9"/>
<dbReference type="STRING" id="360095.BARBAKC583_0023"/>
<dbReference type="GeneID" id="4685108"/>
<dbReference type="KEGG" id="bbk:BARBAKC583_0023"/>
<dbReference type="PATRIC" id="fig|360095.6.peg.23"/>
<dbReference type="eggNOG" id="COG0045">
    <property type="taxonomic scope" value="Bacteria"/>
</dbReference>
<dbReference type="HOGENOM" id="CLU_037430_0_2_5"/>
<dbReference type="OrthoDB" id="9802602at2"/>
<dbReference type="BRENDA" id="6.2.1.4">
    <property type="organism ID" value="790"/>
</dbReference>
<dbReference type="UniPathway" id="UPA00223">
    <property type="reaction ID" value="UER00999"/>
</dbReference>
<dbReference type="Proteomes" id="UP000000643">
    <property type="component" value="Chromosome"/>
</dbReference>
<dbReference type="GO" id="GO:0005829">
    <property type="term" value="C:cytosol"/>
    <property type="evidence" value="ECO:0007669"/>
    <property type="project" value="TreeGrafter"/>
</dbReference>
<dbReference type="GO" id="GO:0042709">
    <property type="term" value="C:succinate-CoA ligase complex"/>
    <property type="evidence" value="ECO:0007669"/>
    <property type="project" value="TreeGrafter"/>
</dbReference>
<dbReference type="GO" id="GO:0005524">
    <property type="term" value="F:ATP binding"/>
    <property type="evidence" value="ECO:0007669"/>
    <property type="project" value="UniProtKB-UniRule"/>
</dbReference>
<dbReference type="GO" id="GO:0000287">
    <property type="term" value="F:magnesium ion binding"/>
    <property type="evidence" value="ECO:0007669"/>
    <property type="project" value="UniProtKB-UniRule"/>
</dbReference>
<dbReference type="GO" id="GO:0004775">
    <property type="term" value="F:succinate-CoA ligase (ADP-forming) activity"/>
    <property type="evidence" value="ECO:0007669"/>
    <property type="project" value="UniProtKB-UniRule"/>
</dbReference>
<dbReference type="GO" id="GO:0004776">
    <property type="term" value="F:succinate-CoA ligase (GDP-forming) activity"/>
    <property type="evidence" value="ECO:0007669"/>
    <property type="project" value="RHEA"/>
</dbReference>
<dbReference type="GO" id="GO:0006104">
    <property type="term" value="P:succinyl-CoA metabolic process"/>
    <property type="evidence" value="ECO:0007669"/>
    <property type="project" value="TreeGrafter"/>
</dbReference>
<dbReference type="GO" id="GO:0006099">
    <property type="term" value="P:tricarboxylic acid cycle"/>
    <property type="evidence" value="ECO:0007669"/>
    <property type="project" value="UniProtKB-UniRule"/>
</dbReference>
<dbReference type="FunFam" id="3.30.1490.20:FF:000002">
    <property type="entry name" value="Succinate--CoA ligase [ADP-forming] subunit beta"/>
    <property type="match status" value="1"/>
</dbReference>
<dbReference type="FunFam" id="3.30.470.20:FF:000002">
    <property type="entry name" value="Succinate--CoA ligase [ADP-forming] subunit beta"/>
    <property type="match status" value="1"/>
</dbReference>
<dbReference type="FunFam" id="3.40.50.261:FF:000001">
    <property type="entry name" value="Succinate--CoA ligase [ADP-forming] subunit beta"/>
    <property type="match status" value="1"/>
</dbReference>
<dbReference type="Gene3D" id="3.30.1490.20">
    <property type="entry name" value="ATP-grasp fold, A domain"/>
    <property type="match status" value="1"/>
</dbReference>
<dbReference type="Gene3D" id="3.30.470.20">
    <property type="entry name" value="ATP-grasp fold, B domain"/>
    <property type="match status" value="1"/>
</dbReference>
<dbReference type="Gene3D" id="3.40.50.261">
    <property type="entry name" value="Succinyl-CoA synthetase domains"/>
    <property type="match status" value="1"/>
</dbReference>
<dbReference type="HAMAP" id="MF_00558">
    <property type="entry name" value="Succ_CoA_beta"/>
    <property type="match status" value="1"/>
</dbReference>
<dbReference type="InterPro" id="IPR011761">
    <property type="entry name" value="ATP-grasp"/>
</dbReference>
<dbReference type="InterPro" id="IPR013650">
    <property type="entry name" value="ATP-grasp_succ-CoA_synth-type"/>
</dbReference>
<dbReference type="InterPro" id="IPR013815">
    <property type="entry name" value="ATP_grasp_subdomain_1"/>
</dbReference>
<dbReference type="InterPro" id="IPR017866">
    <property type="entry name" value="Succ-CoA_synthase_bsu_CS"/>
</dbReference>
<dbReference type="InterPro" id="IPR005811">
    <property type="entry name" value="SUCC_ACL_C"/>
</dbReference>
<dbReference type="InterPro" id="IPR005809">
    <property type="entry name" value="Succ_CoA_ligase-like_bsu"/>
</dbReference>
<dbReference type="InterPro" id="IPR016102">
    <property type="entry name" value="Succinyl-CoA_synth-like"/>
</dbReference>
<dbReference type="NCBIfam" id="NF001913">
    <property type="entry name" value="PRK00696.1"/>
    <property type="match status" value="1"/>
</dbReference>
<dbReference type="NCBIfam" id="TIGR01016">
    <property type="entry name" value="sucCoAbeta"/>
    <property type="match status" value="1"/>
</dbReference>
<dbReference type="PANTHER" id="PTHR11815:SF10">
    <property type="entry name" value="SUCCINATE--COA LIGASE [GDP-FORMING] SUBUNIT BETA, MITOCHONDRIAL"/>
    <property type="match status" value="1"/>
</dbReference>
<dbReference type="PANTHER" id="PTHR11815">
    <property type="entry name" value="SUCCINYL-COA SYNTHETASE BETA CHAIN"/>
    <property type="match status" value="1"/>
</dbReference>
<dbReference type="Pfam" id="PF08442">
    <property type="entry name" value="ATP-grasp_2"/>
    <property type="match status" value="1"/>
</dbReference>
<dbReference type="Pfam" id="PF00549">
    <property type="entry name" value="Ligase_CoA"/>
    <property type="match status" value="1"/>
</dbReference>
<dbReference type="PIRSF" id="PIRSF001554">
    <property type="entry name" value="SucCS_beta"/>
    <property type="match status" value="1"/>
</dbReference>
<dbReference type="SUPFAM" id="SSF56059">
    <property type="entry name" value="Glutathione synthetase ATP-binding domain-like"/>
    <property type="match status" value="1"/>
</dbReference>
<dbReference type="SUPFAM" id="SSF52210">
    <property type="entry name" value="Succinyl-CoA synthetase domains"/>
    <property type="match status" value="1"/>
</dbReference>
<dbReference type="PROSITE" id="PS50975">
    <property type="entry name" value="ATP_GRASP"/>
    <property type="match status" value="1"/>
</dbReference>
<dbReference type="PROSITE" id="PS01217">
    <property type="entry name" value="SUCCINYL_COA_LIG_3"/>
    <property type="match status" value="1"/>
</dbReference>
<name>SUCC_BARBK</name>
<proteinExistence type="inferred from homology"/>
<feature type="chain" id="PRO_1000082018" description="Succinate--CoA ligase [ADP-forming] subunit beta">
    <location>
        <begin position="1"/>
        <end position="398"/>
    </location>
</feature>
<feature type="domain" description="ATP-grasp" evidence="1">
    <location>
        <begin position="9"/>
        <end position="254"/>
    </location>
</feature>
<feature type="binding site" evidence="1">
    <location>
        <position position="46"/>
    </location>
    <ligand>
        <name>ATP</name>
        <dbReference type="ChEBI" id="CHEBI:30616"/>
    </ligand>
</feature>
<feature type="binding site" evidence="1">
    <location>
        <begin position="53"/>
        <end position="55"/>
    </location>
    <ligand>
        <name>ATP</name>
        <dbReference type="ChEBI" id="CHEBI:30616"/>
    </ligand>
</feature>
<feature type="binding site" evidence="1">
    <location>
        <position position="109"/>
    </location>
    <ligand>
        <name>ATP</name>
        <dbReference type="ChEBI" id="CHEBI:30616"/>
    </ligand>
</feature>
<feature type="binding site" evidence="1">
    <location>
        <position position="112"/>
    </location>
    <ligand>
        <name>ATP</name>
        <dbReference type="ChEBI" id="CHEBI:30616"/>
    </ligand>
</feature>
<feature type="binding site" evidence="1">
    <location>
        <position position="117"/>
    </location>
    <ligand>
        <name>ATP</name>
        <dbReference type="ChEBI" id="CHEBI:30616"/>
    </ligand>
</feature>
<feature type="binding site" evidence="1">
    <location>
        <position position="209"/>
    </location>
    <ligand>
        <name>Mg(2+)</name>
        <dbReference type="ChEBI" id="CHEBI:18420"/>
    </ligand>
</feature>
<feature type="binding site" evidence="1">
    <location>
        <position position="223"/>
    </location>
    <ligand>
        <name>Mg(2+)</name>
        <dbReference type="ChEBI" id="CHEBI:18420"/>
    </ligand>
</feature>
<feature type="binding site" evidence="1">
    <location>
        <position position="274"/>
    </location>
    <ligand>
        <name>substrate</name>
        <note>ligand shared with subunit alpha</note>
    </ligand>
</feature>
<feature type="binding site" evidence="1">
    <location>
        <begin position="331"/>
        <end position="333"/>
    </location>
    <ligand>
        <name>substrate</name>
        <note>ligand shared with subunit alpha</note>
    </ligand>
</feature>
<protein>
    <recommendedName>
        <fullName evidence="1">Succinate--CoA ligase [ADP-forming] subunit beta</fullName>
        <ecNumber evidence="1">6.2.1.5</ecNumber>
    </recommendedName>
    <alternativeName>
        <fullName evidence="1">Succinyl-CoA synthetase subunit beta</fullName>
        <shortName evidence="1">SCS-beta</shortName>
    </alternativeName>
</protein>
<comment type="function">
    <text evidence="1">Succinyl-CoA synthetase functions in the citric acid cycle (TCA), coupling the hydrolysis of succinyl-CoA to the synthesis of either ATP or GTP and thus represents the only step of substrate-level phosphorylation in the TCA. The beta subunit provides nucleotide specificity of the enzyme and binds the substrate succinate, while the binding sites for coenzyme A and phosphate are found in the alpha subunit.</text>
</comment>
<comment type="catalytic activity">
    <reaction evidence="1">
        <text>succinate + ATP + CoA = succinyl-CoA + ADP + phosphate</text>
        <dbReference type="Rhea" id="RHEA:17661"/>
        <dbReference type="ChEBI" id="CHEBI:30031"/>
        <dbReference type="ChEBI" id="CHEBI:30616"/>
        <dbReference type="ChEBI" id="CHEBI:43474"/>
        <dbReference type="ChEBI" id="CHEBI:57287"/>
        <dbReference type="ChEBI" id="CHEBI:57292"/>
        <dbReference type="ChEBI" id="CHEBI:456216"/>
        <dbReference type="EC" id="6.2.1.5"/>
    </reaction>
    <physiologicalReaction direction="right-to-left" evidence="1">
        <dbReference type="Rhea" id="RHEA:17663"/>
    </physiologicalReaction>
</comment>
<comment type="catalytic activity">
    <reaction evidence="1">
        <text>GTP + succinate + CoA = succinyl-CoA + GDP + phosphate</text>
        <dbReference type="Rhea" id="RHEA:22120"/>
        <dbReference type="ChEBI" id="CHEBI:30031"/>
        <dbReference type="ChEBI" id="CHEBI:37565"/>
        <dbReference type="ChEBI" id="CHEBI:43474"/>
        <dbReference type="ChEBI" id="CHEBI:57287"/>
        <dbReference type="ChEBI" id="CHEBI:57292"/>
        <dbReference type="ChEBI" id="CHEBI:58189"/>
    </reaction>
    <physiologicalReaction direction="right-to-left" evidence="1">
        <dbReference type="Rhea" id="RHEA:22122"/>
    </physiologicalReaction>
</comment>
<comment type="cofactor">
    <cofactor evidence="1">
        <name>Mg(2+)</name>
        <dbReference type="ChEBI" id="CHEBI:18420"/>
    </cofactor>
    <text evidence="1">Binds 1 Mg(2+) ion per subunit.</text>
</comment>
<comment type="pathway">
    <text evidence="1">Carbohydrate metabolism; tricarboxylic acid cycle; succinate from succinyl-CoA (ligase route): step 1/1.</text>
</comment>
<comment type="subunit">
    <text evidence="1">Heterotetramer of two alpha and two beta subunits.</text>
</comment>
<comment type="similarity">
    <text evidence="1">Belongs to the succinate/malate CoA ligase beta subunit family.</text>
</comment>
<reference key="1">
    <citation type="submission" date="2006-12" db="EMBL/GenBank/DDBJ databases">
        <authorList>
            <person name="Hendrix L."/>
            <person name="Mohamoud Y."/>
            <person name="Radune D."/>
            <person name="Shvartsbeyn A."/>
            <person name="Daugherty S."/>
            <person name="Dodson R."/>
            <person name="Durkin A.S."/>
            <person name="Harkins D."/>
            <person name="Huot H."/>
            <person name="Kothari S.P."/>
            <person name="Madupu R."/>
            <person name="Li J."/>
            <person name="Nelson W.C."/>
            <person name="Shrivastava S."/>
            <person name="Giglio M.G."/>
            <person name="Haft D."/>
            <person name="Selengut J."/>
            <person name="Fraser-Ligget C."/>
            <person name="Seshadri R."/>
        </authorList>
    </citation>
    <scope>NUCLEOTIDE SEQUENCE [LARGE SCALE GENOMIC DNA]</scope>
    <source>
        <strain>ATCC 35685 / KC583 / Herrer 020/F12,63</strain>
    </source>
</reference>
<organism>
    <name type="scientific">Bartonella bacilliformis (strain ATCC 35685 / KC583 / Herrer 020/F12,63)</name>
    <dbReference type="NCBI Taxonomy" id="360095"/>
    <lineage>
        <taxon>Bacteria</taxon>
        <taxon>Pseudomonadati</taxon>
        <taxon>Pseudomonadota</taxon>
        <taxon>Alphaproteobacteria</taxon>
        <taxon>Hyphomicrobiales</taxon>
        <taxon>Bartonellaceae</taxon>
        <taxon>Bartonella</taxon>
    </lineage>
</organism>
<accession>A1UQV9</accession>